<proteinExistence type="inferred from homology"/>
<reference key="1">
    <citation type="submission" date="2007-06" db="EMBL/GenBank/DDBJ databases">
        <title>Complete sequence of Sinorhizobium medicae WSM419 chromosome.</title>
        <authorList>
            <consortium name="US DOE Joint Genome Institute"/>
            <person name="Copeland A."/>
            <person name="Lucas S."/>
            <person name="Lapidus A."/>
            <person name="Barry K."/>
            <person name="Glavina del Rio T."/>
            <person name="Dalin E."/>
            <person name="Tice H."/>
            <person name="Pitluck S."/>
            <person name="Chain P."/>
            <person name="Malfatti S."/>
            <person name="Shin M."/>
            <person name="Vergez L."/>
            <person name="Schmutz J."/>
            <person name="Larimer F."/>
            <person name="Land M."/>
            <person name="Hauser L."/>
            <person name="Kyrpides N."/>
            <person name="Mikhailova N."/>
            <person name="Reeve W.G."/>
            <person name="Richardson P."/>
        </authorList>
    </citation>
    <scope>NUCLEOTIDE SEQUENCE [LARGE SCALE GENOMIC DNA]</scope>
    <source>
        <strain>WSM419</strain>
    </source>
</reference>
<evidence type="ECO:0000255" key="1">
    <source>
        <dbReference type="HAMAP-Rule" id="MF_01361"/>
    </source>
</evidence>
<protein>
    <recommendedName>
        <fullName evidence="1">UPF0391 membrane protein Smed_0341</fullName>
    </recommendedName>
</protein>
<sequence>MLYYALVFLIVAIIAGVLGFGGIAGASAGIAQVLFFLFLIFLVISLVAGLIRRT</sequence>
<keyword id="KW-1003">Cell membrane</keyword>
<keyword id="KW-0472">Membrane</keyword>
<keyword id="KW-0812">Transmembrane</keyword>
<keyword id="KW-1133">Transmembrane helix</keyword>
<organism>
    <name type="scientific">Sinorhizobium medicae (strain WSM419)</name>
    <name type="common">Ensifer medicae</name>
    <dbReference type="NCBI Taxonomy" id="366394"/>
    <lineage>
        <taxon>Bacteria</taxon>
        <taxon>Pseudomonadati</taxon>
        <taxon>Pseudomonadota</taxon>
        <taxon>Alphaproteobacteria</taxon>
        <taxon>Hyphomicrobiales</taxon>
        <taxon>Rhizobiaceae</taxon>
        <taxon>Sinorhizobium/Ensifer group</taxon>
        <taxon>Sinorhizobium</taxon>
    </lineage>
</organism>
<name>Y341_SINMW</name>
<gene>
    <name type="ordered locus">Smed_0341</name>
</gene>
<dbReference type="EMBL" id="CP000738">
    <property type="protein sequence ID" value="ABR59199.1"/>
    <property type="molecule type" value="Genomic_DNA"/>
</dbReference>
<dbReference type="RefSeq" id="WP_003527150.1">
    <property type="nucleotide sequence ID" value="NC_009636.1"/>
</dbReference>
<dbReference type="RefSeq" id="YP_001326034.1">
    <property type="nucleotide sequence ID" value="NC_009636.1"/>
</dbReference>
<dbReference type="KEGG" id="smd:Smed_0341"/>
<dbReference type="PATRIC" id="fig|366394.8.peg.3412"/>
<dbReference type="eggNOG" id="COG5487">
    <property type="taxonomic scope" value="Bacteria"/>
</dbReference>
<dbReference type="HOGENOM" id="CLU_187346_0_0_5"/>
<dbReference type="Proteomes" id="UP000001108">
    <property type="component" value="Chromosome"/>
</dbReference>
<dbReference type="GO" id="GO:0005886">
    <property type="term" value="C:plasma membrane"/>
    <property type="evidence" value="ECO:0007669"/>
    <property type="project" value="UniProtKB-SubCell"/>
</dbReference>
<dbReference type="HAMAP" id="MF_01361">
    <property type="entry name" value="UPF0391"/>
    <property type="match status" value="1"/>
</dbReference>
<dbReference type="InterPro" id="IPR009760">
    <property type="entry name" value="DUF1328"/>
</dbReference>
<dbReference type="NCBIfam" id="NF010226">
    <property type="entry name" value="PRK13682.1-1"/>
    <property type="match status" value="1"/>
</dbReference>
<dbReference type="NCBIfam" id="NF010228">
    <property type="entry name" value="PRK13682.1-3"/>
    <property type="match status" value="1"/>
</dbReference>
<dbReference type="NCBIfam" id="NF010229">
    <property type="entry name" value="PRK13682.1-4"/>
    <property type="match status" value="1"/>
</dbReference>
<dbReference type="Pfam" id="PF07043">
    <property type="entry name" value="DUF1328"/>
    <property type="match status" value="1"/>
</dbReference>
<dbReference type="PIRSF" id="PIRSF036466">
    <property type="entry name" value="UCP036466"/>
    <property type="match status" value="1"/>
</dbReference>
<accession>A6U6B9</accession>
<feature type="chain" id="PRO_0000314231" description="UPF0391 membrane protein Smed_0341">
    <location>
        <begin position="1"/>
        <end position="54"/>
    </location>
</feature>
<feature type="transmembrane region" description="Helical" evidence="1">
    <location>
        <begin position="5"/>
        <end position="25"/>
    </location>
</feature>
<feature type="transmembrane region" description="Helical" evidence="1">
    <location>
        <begin position="30"/>
        <end position="50"/>
    </location>
</feature>
<comment type="subcellular location">
    <subcellularLocation>
        <location evidence="1">Cell membrane</location>
        <topology evidence="1">Multi-pass membrane protein</topology>
    </subcellularLocation>
</comment>
<comment type="similarity">
    <text evidence="1">Belongs to the UPF0391 family.</text>
</comment>